<keyword id="KW-0489">Methyltransferase</keyword>
<keyword id="KW-1185">Reference proteome</keyword>
<keyword id="KW-0949">S-adenosyl-L-methionine</keyword>
<keyword id="KW-0808">Transferase</keyword>
<reference key="1">
    <citation type="journal article" date="1996" name="Science">
        <title>Complete genome sequence of the methanogenic archaeon, Methanococcus jannaschii.</title>
        <authorList>
            <person name="Bult C.J."/>
            <person name="White O."/>
            <person name="Olsen G.J."/>
            <person name="Zhou L."/>
            <person name="Fleischmann R.D."/>
            <person name="Sutton G.G."/>
            <person name="Blake J.A."/>
            <person name="FitzGerald L.M."/>
            <person name="Clayton R.A."/>
            <person name="Gocayne J.D."/>
            <person name="Kerlavage A.R."/>
            <person name="Dougherty B.A."/>
            <person name="Tomb J.-F."/>
            <person name="Adams M.D."/>
            <person name="Reich C.I."/>
            <person name="Overbeek R."/>
            <person name="Kirkness E.F."/>
            <person name="Weinstock K.G."/>
            <person name="Merrick J.M."/>
            <person name="Glodek A."/>
            <person name="Scott J.L."/>
            <person name="Geoghagen N.S.M."/>
            <person name="Weidman J.F."/>
            <person name="Fuhrmann J.L."/>
            <person name="Nguyen D."/>
            <person name="Utterback T.R."/>
            <person name="Kelley J.M."/>
            <person name="Peterson J.D."/>
            <person name="Sadow P.W."/>
            <person name="Hanna M.C."/>
            <person name="Cotton M.D."/>
            <person name="Roberts K.M."/>
            <person name="Hurst M.A."/>
            <person name="Kaine B.P."/>
            <person name="Borodovsky M."/>
            <person name="Klenk H.-P."/>
            <person name="Fraser C.M."/>
            <person name="Smith H.O."/>
            <person name="Woese C.R."/>
            <person name="Venter J.C."/>
        </authorList>
    </citation>
    <scope>NUCLEOTIDE SEQUENCE [LARGE SCALE GENOMIC DNA]</scope>
    <source>
        <strain>ATCC 43067 / DSM 2661 / JAL-1 / JCM 10045 / NBRC 100440</strain>
    </source>
</reference>
<dbReference type="EC" id="2.1.1.98" evidence="1"/>
<dbReference type="EMBL" id="L77117">
    <property type="protein sequence ID" value="AAB99280.1"/>
    <property type="molecule type" value="Genomic_DNA"/>
</dbReference>
<dbReference type="PIR" id="A64459">
    <property type="entry name" value="A64459"/>
</dbReference>
<dbReference type="RefSeq" id="WP_010870787.1">
    <property type="nucleotide sequence ID" value="NC_000909.1"/>
</dbReference>
<dbReference type="SMR" id="Q58670"/>
<dbReference type="FunCoup" id="Q58670">
    <property type="interactions" value="202"/>
</dbReference>
<dbReference type="STRING" id="243232.MJ_1274"/>
<dbReference type="PaxDb" id="243232-MJ_1274"/>
<dbReference type="EnsemblBacteria" id="AAB99280">
    <property type="protein sequence ID" value="AAB99280"/>
    <property type="gene ID" value="MJ_1274"/>
</dbReference>
<dbReference type="GeneID" id="1452172"/>
<dbReference type="KEGG" id="mja:MJ_1274"/>
<dbReference type="eggNOG" id="arCOG04161">
    <property type="taxonomic scope" value="Archaea"/>
</dbReference>
<dbReference type="HOGENOM" id="CLU_066040_1_0_2"/>
<dbReference type="InParanoid" id="Q58670"/>
<dbReference type="OrthoDB" id="39139at2157"/>
<dbReference type="PhylomeDB" id="Q58670"/>
<dbReference type="UniPathway" id="UPA00559"/>
<dbReference type="Proteomes" id="UP000000805">
    <property type="component" value="Chromosome"/>
</dbReference>
<dbReference type="GO" id="GO:0004164">
    <property type="term" value="F:diphthine synthase activity"/>
    <property type="evidence" value="ECO:0007669"/>
    <property type="project" value="UniProtKB-UniRule"/>
</dbReference>
<dbReference type="GO" id="GO:0032259">
    <property type="term" value="P:methylation"/>
    <property type="evidence" value="ECO:0007669"/>
    <property type="project" value="UniProtKB-KW"/>
</dbReference>
<dbReference type="GO" id="GO:0017183">
    <property type="term" value="P:protein histidyl modification to diphthamide"/>
    <property type="evidence" value="ECO:0007669"/>
    <property type="project" value="UniProtKB-UniRule"/>
</dbReference>
<dbReference type="CDD" id="cd11647">
    <property type="entry name" value="DHP5_DphB"/>
    <property type="match status" value="1"/>
</dbReference>
<dbReference type="Gene3D" id="3.40.1010.10">
    <property type="entry name" value="Cobalt-precorrin-4 Transmethylase, Domain 1"/>
    <property type="match status" value="1"/>
</dbReference>
<dbReference type="Gene3D" id="3.30.950.10">
    <property type="entry name" value="Methyltransferase, Cobalt-precorrin-4 Transmethylase, Domain 2"/>
    <property type="match status" value="1"/>
</dbReference>
<dbReference type="HAMAP" id="MF_01084">
    <property type="entry name" value="Diphthine_synth"/>
    <property type="match status" value="1"/>
</dbReference>
<dbReference type="InterPro" id="IPR000878">
    <property type="entry name" value="4pyrrol_Mease"/>
</dbReference>
<dbReference type="InterPro" id="IPR035996">
    <property type="entry name" value="4pyrrol_Methylase_sf"/>
</dbReference>
<dbReference type="InterPro" id="IPR014777">
    <property type="entry name" value="4pyrrole_Mease_sub1"/>
</dbReference>
<dbReference type="InterPro" id="IPR014776">
    <property type="entry name" value="4pyrrole_Mease_sub2"/>
</dbReference>
<dbReference type="InterPro" id="IPR004551">
    <property type="entry name" value="Dphthn_synthase"/>
</dbReference>
<dbReference type="NCBIfam" id="TIGR00522">
    <property type="entry name" value="dph5"/>
    <property type="match status" value="1"/>
</dbReference>
<dbReference type="PANTHER" id="PTHR10882:SF0">
    <property type="entry name" value="DIPHTHINE METHYL ESTER SYNTHASE"/>
    <property type="match status" value="1"/>
</dbReference>
<dbReference type="PANTHER" id="PTHR10882">
    <property type="entry name" value="DIPHTHINE SYNTHASE"/>
    <property type="match status" value="1"/>
</dbReference>
<dbReference type="Pfam" id="PF00590">
    <property type="entry name" value="TP_methylase"/>
    <property type="match status" value="1"/>
</dbReference>
<dbReference type="PIRSF" id="PIRSF036432">
    <property type="entry name" value="Diphthine_synth"/>
    <property type="match status" value="1"/>
</dbReference>
<dbReference type="SUPFAM" id="SSF53790">
    <property type="entry name" value="Tetrapyrrole methylase"/>
    <property type="match status" value="1"/>
</dbReference>
<gene>
    <name evidence="1" type="primary">dphB</name>
    <name type="ordered locus">MJ1274</name>
</gene>
<proteinExistence type="inferred from homology"/>
<protein>
    <recommendedName>
        <fullName evidence="1">Diphthine synthase</fullName>
        <ecNumber evidence="1">2.1.1.98</ecNumber>
    </recommendedName>
    <alternativeName>
        <fullName evidence="1">Diphthamide biosynthesis methyltransferase</fullName>
    </alternativeName>
</protein>
<feature type="chain" id="PRO_0000156118" description="Diphthine synthase">
    <location>
        <begin position="1"/>
        <end position="257"/>
    </location>
</feature>
<feature type="binding site" evidence="1">
    <location>
        <position position="9"/>
    </location>
    <ligand>
        <name>S-adenosyl-L-methionine</name>
        <dbReference type="ChEBI" id="CHEBI:59789"/>
    </ligand>
</feature>
<feature type="binding site" evidence="1">
    <location>
        <position position="85"/>
    </location>
    <ligand>
        <name>S-adenosyl-L-methionine</name>
        <dbReference type="ChEBI" id="CHEBI:59789"/>
    </ligand>
</feature>
<feature type="binding site" evidence="1">
    <location>
        <position position="88"/>
    </location>
    <ligand>
        <name>S-adenosyl-L-methionine</name>
        <dbReference type="ChEBI" id="CHEBI:59789"/>
    </ligand>
</feature>
<feature type="binding site" evidence="1">
    <location>
        <begin position="113"/>
        <end position="114"/>
    </location>
    <ligand>
        <name>S-adenosyl-L-methionine</name>
        <dbReference type="ChEBI" id="CHEBI:59789"/>
    </ligand>
</feature>
<feature type="binding site" evidence="1">
    <location>
        <position position="164"/>
    </location>
    <ligand>
        <name>S-adenosyl-L-methionine</name>
        <dbReference type="ChEBI" id="CHEBI:59789"/>
    </ligand>
</feature>
<feature type="binding site" evidence="1">
    <location>
        <position position="209"/>
    </location>
    <ligand>
        <name>S-adenosyl-L-methionine</name>
        <dbReference type="ChEBI" id="CHEBI:59789"/>
    </ligand>
</feature>
<feature type="binding site" evidence="1">
    <location>
        <position position="234"/>
    </location>
    <ligand>
        <name>S-adenosyl-L-methionine</name>
        <dbReference type="ChEBI" id="CHEBI:59789"/>
    </ligand>
</feature>
<name>DPHB_METJA</name>
<sequence length="257" mass="29037">MLILAGLGLYDENDMTLKTLKFAKKAEKIYAEFYTAVLTGTTTEKIEEVLGKKIHVLSRKDVEYNGYKLIEEAKDKDIMFLTAGDPMVATTHVDLAIEAKKKGIEVLIINAPSIYSAVGITGLQLYKFGKTTSIVFPEENYFPETPYNVIKENLERGLHTLCLLDIRIDENEKRFMTANEGLKVLLELENRKKEGIINEDTKAVVVARAGSLKPKLVYGKIKDLINYDFGEPLHCIIIPGKLHFMEEDALKYLCENI</sequence>
<comment type="function">
    <text evidence="1">S-adenosyl-L-methionine-dependent methyltransferase that catalyzes the trimethylation of the amino group of the modified target histidine residue in translation elongation factor 2 (EF-2), to form an intermediate called diphthine. The three successive methylation reactions represent the second step of diphthamide biosynthesis.</text>
</comment>
<comment type="catalytic activity">
    <reaction evidence="1">
        <text>2-[(3S)-amino-3-carboxypropyl]-L-histidyl-[translation elongation factor 2] + 3 S-adenosyl-L-methionine = diphthine-[translation elongation factor 2] + 3 S-adenosyl-L-homocysteine + 3 H(+)</text>
        <dbReference type="Rhea" id="RHEA:36415"/>
        <dbReference type="Rhea" id="RHEA-COMP:9749"/>
        <dbReference type="Rhea" id="RHEA-COMP:10172"/>
        <dbReference type="ChEBI" id="CHEBI:15378"/>
        <dbReference type="ChEBI" id="CHEBI:57856"/>
        <dbReference type="ChEBI" id="CHEBI:59789"/>
        <dbReference type="ChEBI" id="CHEBI:73995"/>
        <dbReference type="ChEBI" id="CHEBI:82696"/>
        <dbReference type="EC" id="2.1.1.98"/>
    </reaction>
</comment>
<comment type="pathway">
    <text evidence="1">Protein modification; peptidyl-diphthamide biosynthesis.</text>
</comment>
<comment type="subunit">
    <text evidence="1">Homodimer.</text>
</comment>
<comment type="similarity">
    <text evidence="1">Belongs to the diphthine synthase family.</text>
</comment>
<organism>
    <name type="scientific">Methanocaldococcus jannaschii (strain ATCC 43067 / DSM 2661 / JAL-1 / JCM 10045 / NBRC 100440)</name>
    <name type="common">Methanococcus jannaschii</name>
    <dbReference type="NCBI Taxonomy" id="243232"/>
    <lineage>
        <taxon>Archaea</taxon>
        <taxon>Methanobacteriati</taxon>
        <taxon>Methanobacteriota</taxon>
        <taxon>Methanomada group</taxon>
        <taxon>Methanococci</taxon>
        <taxon>Methanococcales</taxon>
        <taxon>Methanocaldococcaceae</taxon>
        <taxon>Methanocaldococcus</taxon>
    </lineage>
</organism>
<accession>Q58670</accession>
<evidence type="ECO:0000255" key="1">
    <source>
        <dbReference type="HAMAP-Rule" id="MF_01084"/>
    </source>
</evidence>